<reference key="1">
    <citation type="submission" date="2007-09" db="EMBL/GenBank/DDBJ databases">
        <title>Complete genome sequencing of Rickettsia bellii.</title>
        <authorList>
            <person name="Madan A."/>
            <person name="Lee H."/>
            <person name="Madan A."/>
            <person name="Yoon J.-G."/>
            <person name="Ryu G.-Y."/>
            <person name="Dasch G."/>
            <person name="Ereemeva M."/>
        </authorList>
    </citation>
    <scope>NUCLEOTIDE SEQUENCE [LARGE SCALE GENOMIC DNA]</scope>
    <source>
        <strain>OSU 85-389</strain>
    </source>
</reference>
<proteinExistence type="inferred from homology"/>
<dbReference type="EC" id="7.4.2.8" evidence="1"/>
<dbReference type="EMBL" id="CP000849">
    <property type="protein sequence ID" value="ABV78855.1"/>
    <property type="molecule type" value="Genomic_DNA"/>
</dbReference>
<dbReference type="RefSeq" id="WP_012151700.1">
    <property type="nucleotide sequence ID" value="NC_009883.1"/>
</dbReference>
<dbReference type="SMR" id="A8GVH8"/>
<dbReference type="KEGG" id="rbo:A1I_02405"/>
<dbReference type="HOGENOM" id="CLU_005314_3_0_5"/>
<dbReference type="GO" id="GO:0031522">
    <property type="term" value="C:cell envelope Sec protein transport complex"/>
    <property type="evidence" value="ECO:0007669"/>
    <property type="project" value="TreeGrafter"/>
</dbReference>
<dbReference type="GO" id="GO:0005829">
    <property type="term" value="C:cytosol"/>
    <property type="evidence" value="ECO:0007669"/>
    <property type="project" value="TreeGrafter"/>
</dbReference>
<dbReference type="GO" id="GO:0005886">
    <property type="term" value="C:plasma membrane"/>
    <property type="evidence" value="ECO:0007669"/>
    <property type="project" value="UniProtKB-SubCell"/>
</dbReference>
<dbReference type="GO" id="GO:0005524">
    <property type="term" value="F:ATP binding"/>
    <property type="evidence" value="ECO:0007669"/>
    <property type="project" value="UniProtKB-UniRule"/>
</dbReference>
<dbReference type="GO" id="GO:0046872">
    <property type="term" value="F:metal ion binding"/>
    <property type="evidence" value="ECO:0007669"/>
    <property type="project" value="UniProtKB-KW"/>
</dbReference>
<dbReference type="GO" id="GO:0008564">
    <property type="term" value="F:protein-exporting ATPase activity"/>
    <property type="evidence" value="ECO:0007669"/>
    <property type="project" value="UniProtKB-EC"/>
</dbReference>
<dbReference type="GO" id="GO:0065002">
    <property type="term" value="P:intracellular protein transmembrane transport"/>
    <property type="evidence" value="ECO:0007669"/>
    <property type="project" value="UniProtKB-UniRule"/>
</dbReference>
<dbReference type="GO" id="GO:0017038">
    <property type="term" value="P:protein import"/>
    <property type="evidence" value="ECO:0007669"/>
    <property type="project" value="InterPro"/>
</dbReference>
<dbReference type="GO" id="GO:0006605">
    <property type="term" value="P:protein targeting"/>
    <property type="evidence" value="ECO:0007669"/>
    <property type="project" value="UniProtKB-UniRule"/>
</dbReference>
<dbReference type="GO" id="GO:0043952">
    <property type="term" value="P:protein transport by the Sec complex"/>
    <property type="evidence" value="ECO:0007669"/>
    <property type="project" value="TreeGrafter"/>
</dbReference>
<dbReference type="CDD" id="cd17928">
    <property type="entry name" value="DEXDc_SecA"/>
    <property type="match status" value="1"/>
</dbReference>
<dbReference type="CDD" id="cd18803">
    <property type="entry name" value="SF2_C_secA"/>
    <property type="match status" value="1"/>
</dbReference>
<dbReference type="FunFam" id="3.40.50.300:FF:000113">
    <property type="entry name" value="Preprotein translocase subunit SecA"/>
    <property type="match status" value="1"/>
</dbReference>
<dbReference type="FunFam" id="3.90.1440.10:FF:000001">
    <property type="entry name" value="Preprotein translocase subunit SecA"/>
    <property type="match status" value="1"/>
</dbReference>
<dbReference type="FunFam" id="1.10.3060.10:FF:000003">
    <property type="entry name" value="Protein translocase subunit SecA"/>
    <property type="match status" value="1"/>
</dbReference>
<dbReference type="FunFam" id="3.40.50.300:FF:000334">
    <property type="entry name" value="Protein translocase subunit SecA"/>
    <property type="match status" value="1"/>
</dbReference>
<dbReference type="Gene3D" id="1.10.3060.10">
    <property type="entry name" value="Helical scaffold and wing domains of SecA"/>
    <property type="match status" value="1"/>
</dbReference>
<dbReference type="Gene3D" id="3.40.50.300">
    <property type="entry name" value="P-loop containing nucleotide triphosphate hydrolases"/>
    <property type="match status" value="2"/>
</dbReference>
<dbReference type="Gene3D" id="3.90.1440.10">
    <property type="entry name" value="SecA, preprotein cross-linking domain"/>
    <property type="match status" value="1"/>
</dbReference>
<dbReference type="HAMAP" id="MF_01382">
    <property type="entry name" value="SecA"/>
    <property type="match status" value="1"/>
</dbReference>
<dbReference type="InterPro" id="IPR014001">
    <property type="entry name" value="Helicase_ATP-bd"/>
</dbReference>
<dbReference type="InterPro" id="IPR027417">
    <property type="entry name" value="P-loop_NTPase"/>
</dbReference>
<dbReference type="InterPro" id="IPR004027">
    <property type="entry name" value="SEC_C_motif"/>
</dbReference>
<dbReference type="InterPro" id="IPR000185">
    <property type="entry name" value="SecA"/>
</dbReference>
<dbReference type="InterPro" id="IPR020937">
    <property type="entry name" value="SecA_CS"/>
</dbReference>
<dbReference type="InterPro" id="IPR011115">
    <property type="entry name" value="SecA_DEAD"/>
</dbReference>
<dbReference type="InterPro" id="IPR014018">
    <property type="entry name" value="SecA_motor_DEAD"/>
</dbReference>
<dbReference type="InterPro" id="IPR011130">
    <property type="entry name" value="SecA_preprotein_X-link_dom"/>
</dbReference>
<dbReference type="InterPro" id="IPR044722">
    <property type="entry name" value="SecA_SF2_C"/>
</dbReference>
<dbReference type="InterPro" id="IPR011116">
    <property type="entry name" value="SecA_Wing/Scaffold"/>
</dbReference>
<dbReference type="InterPro" id="IPR036266">
    <property type="entry name" value="SecA_Wing/Scaffold_sf"/>
</dbReference>
<dbReference type="InterPro" id="IPR036670">
    <property type="entry name" value="SecA_X-link_sf"/>
</dbReference>
<dbReference type="NCBIfam" id="NF009538">
    <property type="entry name" value="PRK12904.1"/>
    <property type="match status" value="1"/>
</dbReference>
<dbReference type="NCBIfam" id="TIGR00963">
    <property type="entry name" value="secA"/>
    <property type="match status" value="1"/>
</dbReference>
<dbReference type="PANTHER" id="PTHR30612:SF0">
    <property type="entry name" value="CHLOROPLAST PROTEIN-TRANSPORTING ATPASE"/>
    <property type="match status" value="1"/>
</dbReference>
<dbReference type="PANTHER" id="PTHR30612">
    <property type="entry name" value="SECA INNER MEMBRANE COMPONENT OF SEC PROTEIN SECRETION SYSTEM"/>
    <property type="match status" value="1"/>
</dbReference>
<dbReference type="Pfam" id="PF21090">
    <property type="entry name" value="P-loop_SecA"/>
    <property type="match status" value="1"/>
</dbReference>
<dbReference type="Pfam" id="PF02810">
    <property type="entry name" value="SEC-C"/>
    <property type="match status" value="1"/>
</dbReference>
<dbReference type="Pfam" id="PF07517">
    <property type="entry name" value="SecA_DEAD"/>
    <property type="match status" value="1"/>
</dbReference>
<dbReference type="Pfam" id="PF01043">
    <property type="entry name" value="SecA_PP_bind"/>
    <property type="match status" value="1"/>
</dbReference>
<dbReference type="Pfam" id="PF07516">
    <property type="entry name" value="SecA_SW"/>
    <property type="match status" value="1"/>
</dbReference>
<dbReference type="PRINTS" id="PR00906">
    <property type="entry name" value="SECA"/>
</dbReference>
<dbReference type="SMART" id="SM00957">
    <property type="entry name" value="SecA_DEAD"/>
    <property type="match status" value="1"/>
</dbReference>
<dbReference type="SMART" id="SM00958">
    <property type="entry name" value="SecA_PP_bind"/>
    <property type="match status" value="1"/>
</dbReference>
<dbReference type="SUPFAM" id="SSF81886">
    <property type="entry name" value="Helical scaffold and wing domains of SecA"/>
    <property type="match status" value="1"/>
</dbReference>
<dbReference type="SUPFAM" id="SSF52540">
    <property type="entry name" value="P-loop containing nucleoside triphosphate hydrolases"/>
    <property type="match status" value="2"/>
</dbReference>
<dbReference type="SUPFAM" id="SSF81767">
    <property type="entry name" value="Pre-protein crosslinking domain of SecA"/>
    <property type="match status" value="1"/>
</dbReference>
<dbReference type="PROSITE" id="PS01312">
    <property type="entry name" value="SECA"/>
    <property type="match status" value="1"/>
</dbReference>
<dbReference type="PROSITE" id="PS51196">
    <property type="entry name" value="SECA_MOTOR_DEAD"/>
    <property type="match status" value="1"/>
</dbReference>
<keyword id="KW-0067">ATP-binding</keyword>
<keyword id="KW-0997">Cell inner membrane</keyword>
<keyword id="KW-1003">Cell membrane</keyword>
<keyword id="KW-0963">Cytoplasm</keyword>
<keyword id="KW-0472">Membrane</keyword>
<keyword id="KW-0479">Metal-binding</keyword>
<keyword id="KW-0547">Nucleotide-binding</keyword>
<keyword id="KW-0653">Protein transport</keyword>
<keyword id="KW-1278">Translocase</keyword>
<keyword id="KW-0811">Translocation</keyword>
<keyword id="KW-0813">Transport</keyword>
<keyword id="KW-0862">Zinc</keyword>
<comment type="function">
    <text evidence="1">Part of the Sec protein translocase complex. Interacts with the SecYEG preprotein conducting channel. Has a central role in coupling the hydrolysis of ATP to the transfer of proteins into and across the cell membrane, serving both as a receptor for the preprotein-SecB complex and as an ATP-driven molecular motor driving the stepwise translocation of polypeptide chains across the membrane.</text>
</comment>
<comment type="catalytic activity">
    <reaction evidence="1">
        <text>ATP + H2O + cellular proteinSide 1 = ADP + phosphate + cellular proteinSide 2.</text>
        <dbReference type="EC" id="7.4.2.8"/>
    </reaction>
</comment>
<comment type="cofactor">
    <cofactor evidence="1">
        <name>Zn(2+)</name>
        <dbReference type="ChEBI" id="CHEBI:29105"/>
    </cofactor>
    <text evidence="1">May bind 1 zinc ion per subunit.</text>
</comment>
<comment type="subunit">
    <text evidence="1">Monomer and homodimer. Part of the essential Sec protein translocation apparatus which comprises SecA, SecYEG and auxiliary proteins SecDF-YajC and YidC.</text>
</comment>
<comment type="subcellular location">
    <subcellularLocation>
        <location evidence="1">Cell inner membrane</location>
        <topology evidence="1">Peripheral membrane protein</topology>
        <orientation evidence="1">Cytoplasmic side</orientation>
    </subcellularLocation>
    <subcellularLocation>
        <location evidence="1">Cytoplasm</location>
    </subcellularLocation>
    <text evidence="1">Distribution is 50-50.</text>
</comment>
<comment type="similarity">
    <text evidence="1">Belongs to the SecA family.</text>
</comment>
<gene>
    <name evidence="1" type="primary">secA</name>
    <name type="ordered locus">A1I_02405</name>
</gene>
<organism>
    <name type="scientific">Rickettsia bellii (strain OSU 85-389)</name>
    <dbReference type="NCBI Taxonomy" id="391896"/>
    <lineage>
        <taxon>Bacteria</taxon>
        <taxon>Pseudomonadati</taxon>
        <taxon>Pseudomonadota</taxon>
        <taxon>Alphaproteobacteria</taxon>
        <taxon>Rickettsiales</taxon>
        <taxon>Rickettsiaceae</taxon>
        <taxon>Rickettsieae</taxon>
        <taxon>Rickettsia</taxon>
        <taxon>belli group</taxon>
    </lineage>
</organism>
<name>SECA_RICB8</name>
<protein>
    <recommendedName>
        <fullName evidence="1">Protein translocase subunit SecA</fullName>
        <ecNumber evidence="1">7.4.2.8</ecNumber>
    </recommendedName>
</protein>
<feature type="chain" id="PRO_0000320975" description="Protein translocase subunit SecA">
    <location>
        <begin position="1"/>
        <end position="910"/>
    </location>
</feature>
<feature type="binding site" evidence="1">
    <location>
        <position position="86"/>
    </location>
    <ligand>
        <name>ATP</name>
        <dbReference type="ChEBI" id="CHEBI:30616"/>
    </ligand>
</feature>
<feature type="binding site" evidence="1">
    <location>
        <begin position="104"/>
        <end position="108"/>
    </location>
    <ligand>
        <name>ATP</name>
        <dbReference type="ChEBI" id="CHEBI:30616"/>
    </ligand>
</feature>
<feature type="binding site" evidence="1">
    <location>
        <position position="499"/>
    </location>
    <ligand>
        <name>ATP</name>
        <dbReference type="ChEBI" id="CHEBI:30616"/>
    </ligand>
</feature>
<feature type="binding site" evidence="1">
    <location>
        <position position="894"/>
    </location>
    <ligand>
        <name>Zn(2+)</name>
        <dbReference type="ChEBI" id="CHEBI:29105"/>
    </ligand>
</feature>
<feature type="binding site" evidence="1">
    <location>
        <position position="896"/>
    </location>
    <ligand>
        <name>Zn(2+)</name>
        <dbReference type="ChEBI" id="CHEBI:29105"/>
    </ligand>
</feature>
<feature type="binding site" evidence="1">
    <location>
        <position position="905"/>
    </location>
    <ligand>
        <name>Zn(2+)</name>
        <dbReference type="ChEBI" id="CHEBI:29105"/>
    </ligand>
</feature>
<feature type="binding site" evidence="1">
    <location>
        <position position="906"/>
    </location>
    <ligand>
        <name>Zn(2+)</name>
        <dbReference type="ChEBI" id="CHEBI:29105"/>
    </ligand>
</feature>
<sequence>MFSILKKIFGTANDRTIKKLFSDIAKINSLEPAIQKLSDEELKNKTVEFKKKLKNGATLDDIAYEAFAVVREASRRVYGMRHFDVQLIGGLVLHRGMITEMRTGEGKTLVATLPAYLNALAEKGVYVVTVNDYLVSRDSASMGKIYNFLGLSVGCIVAGMTDEAKREAYNSDITYATNNELGFDYLRDNMKYSLQERVLRPFNFAIIDEVDSILIDEARTPLVISGPVNDNSELYGKVDKLVRMLNVSDFEKDEKLKTINLTESGISHVESLLSQADIIKPNSGLYDFENLSLVHYVNQALRAHNMFMIDVDYLVRDGKVMIIDEFTGRVMEGRRYSEGLHQALEAKENVKIQNENQTLASITFQNYFRNYPKLSGMTGTAMTEAPELKDIYNLDVVAVPTHNKVTRRDLDDEIYGSKKEKYDAILKLIKDCYDRGQPVLVGTVSIEKSEEISNVLNKNKIPHKVLNAKFHEQEAFIIAQAGRFKAVTIATNMAGRGTDIMLGGNPEMLIEQIDRKSLTNAAYKEKVNEIKAQTAEEKKQVIAAGGLFVIGTERHESRRIDNQLRGRSGRQGDPGNTKFFLSLDDDLMRIFASERISGVLRTLGLKDGEAIHHPMISRSLEKAQQKVEGHNYEIRKNLLRFDDVMNDQRKIIYEQRTEIIKSKDSYDFLSSTTEELAKKIVLTFMPAGSYREDWDIENLSVELHRTFAIKLDQNLISKNDVTEEEVTKIVIQTADSIYKSKEEAYSPDLMHNAVKYILLTTLDQVWKDHLHSLDHLRQGISLRAYAQKDPLSEYKREAFNLFEHMLNNLKELFIQTVYHFHIDLKHIQKEDISLENKKLQNNMHESREDPAFSKYNAGSNLETDLRPVISRINPEDRDPKNPTSWGKVSRNELCPCGSGKKYKYCHGLNE</sequence>
<accession>A8GVH8</accession>
<evidence type="ECO:0000255" key="1">
    <source>
        <dbReference type="HAMAP-Rule" id="MF_01382"/>
    </source>
</evidence>